<proteinExistence type="inferred from homology"/>
<protein>
    <recommendedName>
        <fullName evidence="1">Ribosome-binding factor A</fullName>
    </recommendedName>
</protein>
<sequence length="134" mass="15536">MKHADLSQRQLRVGEQVRHALAHMLQRGILLDDALKDVVFSVSEVRMSPDLKIATCFVSFLNTVDDISRATLIKVLNKHSRFIRGEISSSLRQMKYMPELRFRLDNSFDNFSKIDALLRLPEVARDLHHHKPED</sequence>
<evidence type="ECO:0000255" key="1">
    <source>
        <dbReference type="HAMAP-Rule" id="MF_00003"/>
    </source>
</evidence>
<evidence type="ECO:0000305" key="2"/>
<accession>A1UU51</accession>
<comment type="function">
    <text evidence="1">One of several proteins that assist in the late maturation steps of the functional core of the 30S ribosomal subunit. Associates with free 30S ribosomal subunits (but not with 30S subunits that are part of 70S ribosomes or polysomes). Required for efficient processing of 16S rRNA. May interact with the 5'-terminal helix region of 16S rRNA.</text>
</comment>
<comment type="subunit">
    <text evidence="1">Monomer. Binds 30S ribosomal subunits, but not 50S ribosomal subunits or 70S ribosomes.</text>
</comment>
<comment type="subcellular location">
    <subcellularLocation>
        <location evidence="1">Cytoplasm</location>
    </subcellularLocation>
</comment>
<comment type="similarity">
    <text evidence="1">Belongs to the RbfA family.</text>
</comment>
<comment type="sequence caution" evidence="2">
    <conflict type="erroneous initiation">
        <sequence resource="EMBL-CDS" id="ABM44520"/>
    </conflict>
    <text>Extended N-terminus.</text>
</comment>
<organism>
    <name type="scientific">Bartonella bacilliformis (strain ATCC 35685 / KC583 / Herrer 020/F12,63)</name>
    <dbReference type="NCBI Taxonomy" id="360095"/>
    <lineage>
        <taxon>Bacteria</taxon>
        <taxon>Pseudomonadati</taxon>
        <taxon>Pseudomonadota</taxon>
        <taxon>Alphaproteobacteria</taxon>
        <taxon>Hyphomicrobiales</taxon>
        <taxon>Bartonellaceae</taxon>
        <taxon>Bartonella</taxon>
    </lineage>
</organism>
<dbReference type="EMBL" id="CP000524">
    <property type="protein sequence ID" value="ABM44520.1"/>
    <property type="status" value="ALT_INIT"/>
    <property type="molecule type" value="Genomic_DNA"/>
</dbReference>
<dbReference type="RefSeq" id="WP_005767985.1">
    <property type="nucleotide sequence ID" value="NC_008783.1"/>
</dbReference>
<dbReference type="SMR" id="A1UU51"/>
<dbReference type="STRING" id="360095.BARBAKC583_1255"/>
<dbReference type="GeneID" id="4684192"/>
<dbReference type="KEGG" id="bbk:BARBAKC583_1255"/>
<dbReference type="PATRIC" id="fig|360095.6.peg.1231"/>
<dbReference type="eggNOG" id="COG0858">
    <property type="taxonomic scope" value="Bacteria"/>
</dbReference>
<dbReference type="HOGENOM" id="CLU_089475_1_0_5"/>
<dbReference type="OrthoDB" id="9805051at2"/>
<dbReference type="Proteomes" id="UP000000643">
    <property type="component" value="Chromosome"/>
</dbReference>
<dbReference type="GO" id="GO:0005829">
    <property type="term" value="C:cytosol"/>
    <property type="evidence" value="ECO:0007669"/>
    <property type="project" value="TreeGrafter"/>
</dbReference>
<dbReference type="GO" id="GO:0043024">
    <property type="term" value="F:ribosomal small subunit binding"/>
    <property type="evidence" value="ECO:0007669"/>
    <property type="project" value="TreeGrafter"/>
</dbReference>
<dbReference type="GO" id="GO:0030490">
    <property type="term" value="P:maturation of SSU-rRNA"/>
    <property type="evidence" value="ECO:0007669"/>
    <property type="project" value="UniProtKB-UniRule"/>
</dbReference>
<dbReference type="Gene3D" id="3.30.300.20">
    <property type="match status" value="1"/>
</dbReference>
<dbReference type="HAMAP" id="MF_00003">
    <property type="entry name" value="RbfA"/>
    <property type="match status" value="1"/>
</dbReference>
<dbReference type="InterPro" id="IPR015946">
    <property type="entry name" value="KH_dom-like_a/b"/>
</dbReference>
<dbReference type="InterPro" id="IPR000238">
    <property type="entry name" value="RbfA"/>
</dbReference>
<dbReference type="InterPro" id="IPR023799">
    <property type="entry name" value="RbfA_dom_sf"/>
</dbReference>
<dbReference type="InterPro" id="IPR020053">
    <property type="entry name" value="Ribosome-bd_factorA_CS"/>
</dbReference>
<dbReference type="NCBIfam" id="NF001802">
    <property type="entry name" value="PRK00521.2-5"/>
    <property type="match status" value="1"/>
</dbReference>
<dbReference type="NCBIfam" id="TIGR00082">
    <property type="entry name" value="rbfA"/>
    <property type="match status" value="1"/>
</dbReference>
<dbReference type="PANTHER" id="PTHR33515">
    <property type="entry name" value="RIBOSOME-BINDING FACTOR A, CHLOROPLASTIC-RELATED"/>
    <property type="match status" value="1"/>
</dbReference>
<dbReference type="PANTHER" id="PTHR33515:SF1">
    <property type="entry name" value="RIBOSOME-BINDING FACTOR A, CHLOROPLASTIC-RELATED"/>
    <property type="match status" value="1"/>
</dbReference>
<dbReference type="Pfam" id="PF02033">
    <property type="entry name" value="RBFA"/>
    <property type="match status" value="1"/>
</dbReference>
<dbReference type="SUPFAM" id="SSF89919">
    <property type="entry name" value="Ribosome-binding factor A, RbfA"/>
    <property type="match status" value="1"/>
</dbReference>
<dbReference type="PROSITE" id="PS01319">
    <property type="entry name" value="RBFA"/>
    <property type="match status" value="1"/>
</dbReference>
<keyword id="KW-0963">Cytoplasm</keyword>
<keyword id="KW-0690">Ribosome biogenesis</keyword>
<feature type="chain" id="PRO_0000321201" description="Ribosome-binding factor A">
    <location>
        <begin position="1"/>
        <end position="134"/>
    </location>
</feature>
<reference key="1">
    <citation type="submission" date="2006-12" db="EMBL/GenBank/DDBJ databases">
        <authorList>
            <person name="Hendrix L."/>
            <person name="Mohamoud Y."/>
            <person name="Radune D."/>
            <person name="Shvartsbeyn A."/>
            <person name="Daugherty S."/>
            <person name="Dodson R."/>
            <person name="Durkin A.S."/>
            <person name="Harkins D."/>
            <person name="Huot H."/>
            <person name="Kothari S.P."/>
            <person name="Madupu R."/>
            <person name="Li J."/>
            <person name="Nelson W.C."/>
            <person name="Shrivastava S."/>
            <person name="Giglio M.G."/>
            <person name="Haft D."/>
            <person name="Selengut J."/>
            <person name="Fraser-Ligget C."/>
            <person name="Seshadri R."/>
        </authorList>
    </citation>
    <scope>NUCLEOTIDE SEQUENCE [LARGE SCALE GENOMIC DNA]</scope>
    <source>
        <strain>ATCC 35685 / KC583 / Herrer 020/F12,63</strain>
    </source>
</reference>
<gene>
    <name evidence="1" type="primary">rbfA</name>
    <name type="ordered locus">BARBAKC583_1255</name>
</gene>
<name>RBFA_BARBK</name>